<protein>
    <recommendedName>
        <fullName>Rho GTPase-activating protein 25</fullName>
    </recommendedName>
    <alternativeName>
        <fullName>Rho-type GTPase-activating protein 25</fullName>
    </alternativeName>
</protein>
<name>RHG25_HUMAN</name>
<proteinExistence type="evidence at protein level"/>
<dbReference type="EMBL" id="D29642">
    <property type="protein sequence ID" value="BAA06125.2"/>
    <property type="status" value="ALT_INIT"/>
    <property type="molecule type" value="mRNA"/>
</dbReference>
<dbReference type="EMBL" id="AK290396">
    <property type="protein sequence ID" value="BAF83085.1"/>
    <property type="molecule type" value="mRNA"/>
</dbReference>
<dbReference type="EMBL" id="AK297056">
    <property type="protein sequence ID" value="BAH12484.1"/>
    <property type="molecule type" value="mRNA"/>
</dbReference>
<dbReference type="EMBL" id="AC097495">
    <property type="status" value="NOT_ANNOTATED_CDS"/>
    <property type="molecule type" value="Genomic_DNA"/>
</dbReference>
<dbReference type="EMBL" id="AC105054">
    <property type="status" value="NOT_ANNOTATED_CDS"/>
    <property type="molecule type" value="Genomic_DNA"/>
</dbReference>
<dbReference type="EMBL" id="AC112700">
    <property type="status" value="NOT_ANNOTATED_CDS"/>
    <property type="molecule type" value="Genomic_DNA"/>
</dbReference>
<dbReference type="EMBL" id="CH471053">
    <property type="protein sequence ID" value="EAW99866.1"/>
    <property type="molecule type" value="Genomic_DNA"/>
</dbReference>
<dbReference type="EMBL" id="BC039591">
    <property type="protein sequence ID" value="AAH39591.1"/>
    <property type="molecule type" value="mRNA"/>
</dbReference>
<dbReference type="CCDS" id="CCDS33214.2">
    <molecule id="P42331-4"/>
</dbReference>
<dbReference type="CCDS" id="CCDS46312.1">
    <molecule id="P42331-3"/>
</dbReference>
<dbReference type="CCDS" id="CCDS54363.1">
    <molecule id="P42331-5"/>
</dbReference>
<dbReference type="CCDS" id="CCDS54364.1">
    <molecule id="P42331-6"/>
</dbReference>
<dbReference type="PIR" id="C59430">
    <property type="entry name" value="C59430"/>
</dbReference>
<dbReference type="RefSeq" id="NP_001007232.2">
    <molecule id="P42331-4"/>
    <property type="nucleotide sequence ID" value="NM_001007231.3"/>
</dbReference>
<dbReference type="RefSeq" id="NP_001159748.1">
    <molecule id="P42331-6"/>
    <property type="nucleotide sequence ID" value="NM_001166276.2"/>
</dbReference>
<dbReference type="RefSeq" id="NP_001159749.1">
    <molecule id="P42331-5"/>
    <property type="nucleotide sequence ID" value="NM_001166277.2"/>
</dbReference>
<dbReference type="RefSeq" id="NP_001351748.1">
    <molecule id="P42331-1"/>
    <property type="nucleotide sequence ID" value="NM_001364819.1"/>
</dbReference>
<dbReference type="RefSeq" id="NP_055697.1">
    <molecule id="P42331-3"/>
    <property type="nucleotide sequence ID" value="NM_014882.3"/>
</dbReference>
<dbReference type="RefSeq" id="XP_005264732.1">
    <property type="nucleotide sequence ID" value="XM_005264675.2"/>
</dbReference>
<dbReference type="PDB" id="1V89">
    <property type="method" value="NMR"/>
    <property type="chains" value="A=47-151"/>
</dbReference>
<dbReference type="PDBsum" id="1V89"/>
<dbReference type="SMR" id="P42331"/>
<dbReference type="BioGRID" id="115264">
    <property type="interactions" value="49"/>
</dbReference>
<dbReference type="FunCoup" id="P42331">
    <property type="interactions" value="392"/>
</dbReference>
<dbReference type="IntAct" id="P42331">
    <property type="interactions" value="26"/>
</dbReference>
<dbReference type="MINT" id="P42331"/>
<dbReference type="STRING" id="9606.ENSP00000386911"/>
<dbReference type="CarbonylDB" id="P42331"/>
<dbReference type="GlyCosmos" id="P42331">
    <property type="glycosylation" value="2 sites, 1 glycan"/>
</dbReference>
<dbReference type="GlyGen" id="P42331">
    <property type="glycosylation" value="2 sites, 1 O-linked glycan (2 sites)"/>
</dbReference>
<dbReference type="iPTMnet" id="P42331"/>
<dbReference type="PhosphoSitePlus" id="P42331"/>
<dbReference type="BioMuta" id="ARHGAP25"/>
<dbReference type="DMDM" id="238054314"/>
<dbReference type="MassIVE" id="P42331"/>
<dbReference type="PaxDb" id="9606-ENSP00000386911"/>
<dbReference type="PeptideAtlas" id="P42331"/>
<dbReference type="ProteomicsDB" id="20155"/>
<dbReference type="ProteomicsDB" id="33928"/>
<dbReference type="ProteomicsDB" id="55505">
    <molecule id="P42331-1"/>
</dbReference>
<dbReference type="ProteomicsDB" id="55506">
    <molecule id="P42331-2"/>
</dbReference>
<dbReference type="ProteomicsDB" id="55507">
    <molecule id="P42331-3"/>
</dbReference>
<dbReference type="ProteomicsDB" id="55508">
    <molecule id="P42331-4"/>
</dbReference>
<dbReference type="Pumba" id="P42331"/>
<dbReference type="Antibodypedia" id="30948">
    <property type="antibodies" value="434 antibodies from 28 providers"/>
</dbReference>
<dbReference type="DNASU" id="9938"/>
<dbReference type="Ensembl" id="ENST00000409030.7">
    <molecule id="P42331-3"/>
    <property type="protein sequence ID" value="ENSP00000386863.3"/>
    <property type="gene ID" value="ENSG00000163219.12"/>
</dbReference>
<dbReference type="Ensembl" id="ENST00000409202.8">
    <molecule id="P42331-4"/>
    <property type="protein sequence ID" value="ENSP00000386911.3"/>
    <property type="gene ID" value="ENSG00000163219.12"/>
</dbReference>
<dbReference type="Ensembl" id="ENST00000409220.5">
    <molecule id="P42331-6"/>
    <property type="protein sequence ID" value="ENSP00000386241.1"/>
    <property type="gene ID" value="ENSG00000163219.12"/>
</dbReference>
<dbReference type="Ensembl" id="ENST00000467265.5">
    <molecule id="P42331-5"/>
    <property type="protein sequence ID" value="ENSP00000420583.1"/>
    <property type="gene ID" value="ENSG00000163219.12"/>
</dbReference>
<dbReference type="Ensembl" id="ENST00000497079.5">
    <molecule id="P42331-2"/>
    <property type="protein sequence ID" value="ENSP00000417139.1"/>
    <property type="gene ID" value="ENSG00000163219.12"/>
</dbReference>
<dbReference type="GeneID" id="9938"/>
<dbReference type="KEGG" id="hsa:9938"/>
<dbReference type="MANE-Select" id="ENST00000409202.8">
    <molecule id="P42331-4"/>
    <property type="protein sequence ID" value="ENSP00000386911.3"/>
    <property type="RefSeq nucleotide sequence ID" value="NM_001007231.3"/>
    <property type="RefSeq protein sequence ID" value="NP_001007232.2"/>
</dbReference>
<dbReference type="UCSC" id="uc002sev.4">
    <molecule id="P42331-1"/>
    <property type="organism name" value="human"/>
</dbReference>
<dbReference type="AGR" id="HGNC:28951"/>
<dbReference type="CTD" id="9938"/>
<dbReference type="DisGeNET" id="9938"/>
<dbReference type="GeneCards" id="ARHGAP25"/>
<dbReference type="HGNC" id="HGNC:28951">
    <property type="gene designation" value="ARHGAP25"/>
</dbReference>
<dbReference type="HPA" id="ENSG00000163219">
    <property type="expression patterns" value="Tissue enhanced (lymphoid)"/>
</dbReference>
<dbReference type="MIM" id="610587">
    <property type="type" value="gene"/>
</dbReference>
<dbReference type="neXtProt" id="NX_P42331"/>
<dbReference type="OpenTargets" id="ENSG00000163219"/>
<dbReference type="PharmGKB" id="PA134941737"/>
<dbReference type="VEuPathDB" id="HostDB:ENSG00000163219"/>
<dbReference type="eggNOG" id="KOG4270">
    <property type="taxonomic scope" value="Eukaryota"/>
</dbReference>
<dbReference type="GeneTree" id="ENSGT00950000183015"/>
<dbReference type="HOGENOM" id="CLU_020795_1_0_1"/>
<dbReference type="InParanoid" id="P42331"/>
<dbReference type="OMA" id="HRASTYD"/>
<dbReference type="OrthoDB" id="185175at2759"/>
<dbReference type="PAN-GO" id="P42331">
    <property type="GO annotations" value="6 GO annotations based on evolutionary models"/>
</dbReference>
<dbReference type="PhylomeDB" id="P42331"/>
<dbReference type="TreeFam" id="TF323577"/>
<dbReference type="PathwayCommons" id="P42331"/>
<dbReference type="Reactome" id="R-HSA-9013149">
    <property type="pathway name" value="RAC1 GTPase cycle"/>
</dbReference>
<dbReference type="SignaLink" id="P42331"/>
<dbReference type="BioGRID-ORCS" id="9938">
    <property type="hits" value="9 hits in 1152 CRISPR screens"/>
</dbReference>
<dbReference type="ChiTaRS" id="ARHGAP25">
    <property type="organism name" value="human"/>
</dbReference>
<dbReference type="EvolutionaryTrace" id="P42331"/>
<dbReference type="GenomeRNAi" id="9938"/>
<dbReference type="Pharos" id="P42331">
    <property type="development level" value="Tbio"/>
</dbReference>
<dbReference type="PRO" id="PR:P42331"/>
<dbReference type="Proteomes" id="UP000005640">
    <property type="component" value="Chromosome 2"/>
</dbReference>
<dbReference type="RNAct" id="P42331">
    <property type="molecule type" value="protein"/>
</dbReference>
<dbReference type="Bgee" id="ENSG00000163219">
    <property type="expression patterns" value="Expressed in granulocyte and 155 other cell types or tissues"/>
</dbReference>
<dbReference type="ExpressionAtlas" id="P42331">
    <property type="expression patterns" value="baseline and differential"/>
</dbReference>
<dbReference type="GO" id="GO:0001891">
    <property type="term" value="C:phagocytic cup"/>
    <property type="evidence" value="ECO:0000314"/>
    <property type="project" value="UniProtKB"/>
</dbReference>
<dbReference type="GO" id="GO:0005096">
    <property type="term" value="F:GTPase activator activity"/>
    <property type="evidence" value="ECO:0000318"/>
    <property type="project" value="GO_Central"/>
</dbReference>
<dbReference type="GO" id="GO:0007015">
    <property type="term" value="P:actin filament organization"/>
    <property type="evidence" value="ECO:0000315"/>
    <property type="project" value="UniProtKB"/>
</dbReference>
<dbReference type="GO" id="GO:0051058">
    <property type="term" value="P:negative regulation of small GTPase mediated signal transduction"/>
    <property type="evidence" value="ECO:0000315"/>
    <property type="project" value="UniProtKB"/>
</dbReference>
<dbReference type="GO" id="GO:0006911">
    <property type="term" value="P:phagocytosis, engulfment"/>
    <property type="evidence" value="ECO:0000315"/>
    <property type="project" value="UniProtKB"/>
</dbReference>
<dbReference type="GO" id="GO:0007165">
    <property type="term" value="P:signal transduction"/>
    <property type="evidence" value="ECO:0007669"/>
    <property type="project" value="InterPro"/>
</dbReference>
<dbReference type="CDD" id="cd13263">
    <property type="entry name" value="PH_RhoGap25-like"/>
    <property type="match status" value="1"/>
</dbReference>
<dbReference type="CDD" id="cd04390">
    <property type="entry name" value="RhoGAP_ARHGAP22_24_25"/>
    <property type="match status" value="1"/>
</dbReference>
<dbReference type="FunFam" id="2.30.29.30:FF:000120">
    <property type="entry name" value="rho GTPase-activating protein 22 isoform X1"/>
    <property type="match status" value="1"/>
</dbReference>
<dbReference type="FunFam" id="1.10.555.10:FF:000015">
    <property type="entry name" value="rho GTPase-activating protein 25 isoform X1"/>
    <property type="match status" value="1"/>
</dbReference>
<dbReference type="Gene3D" id="2.30.29.30">
    <property type="entry name" value="Pleckstrin-homology domain (PH domain)/Phosphotyrosine-binding domain (PTB)"/>
    <property type="match status" value="1"/>
</dbReference>
<dbReference type="Gene3D" id="1.10.555.10">
    <property type="entry name" value="Rho GTPase activation protein"/>
    <property type="match status" value="1"/>
</dbReference>
<dbReference type="InterPro" id="IPR011993">
    <property type="entry name" value="PH-like_dom_sf"/>
</dbReference>
<dbReference type="InterPro" id="IPR001849">
    <property type="entry name" value="PH_domain"/>
</dbReference>
<dbReference type="InterPro" id="IPR008936">
    <property type="entry name" value="Rho_GTPase_activation_prot"/>
</dbReference>
<dbReference type="InterPro" id="IPR051025">
    <property type="entry name" value="RhoGAP"/>
</dbReference>
<dbReference type="InterPro" id="IPR000198">
    <property type="entry name" value="RhoGAP_dom"/>
</dbReference>
<dbReference type="PANTHER" id="PTHR15228:SF20">
    <property type="entry name" value="RHO GTPASE-ACTIVATING PROTEIN 25"/>
    <property type="match status" value="1"/>
</dbReference>
<dbReference type="PANTHER" id="PTHR15228">
    <property type="entry name" value="SPERMATHECAL PHYSIOLOGY VARIANT"/>
    <property type="match status" value="1"/>
</dbReference>
<dbReference type="Pfam" id="PF00169">
    <property type="entry name" value="PH"/>
    <property type="match status" value="1"/>
</dbReference>
<dbReference type="Pfam" id="PF00620">
    <property type="entry name" value="RhoGAP"/>
    <property type="match status" value="1"/>
</dbReference>
<dbReference type="SMART" id="SM00233">
    <property type="entry name" value="PH"/>
    <property type="match status" value="1"/>
</dbReference>
<dbReference type="SMART" id="SM00324">
    <property type="entry name" value="RhoGAP"/>
    <property type="match status" value="1"/>
</dbReference>
<dbReference type="SUPFAM" id="SSF48350">
    <property type="entry name" value="GTPase activation domain, GAP"/>
    <property type="match status" value="1"/>
</dbReference>
<dbReference type="SUPFAM" id="SSF50729">
    <property type="entry name" value="PH domain-like"/>
    <property type="match status" value="1"/>
</dbReference>
<dbReference type="PROSITE" id="PS50003">
    <property type="entry name" value="PH_DOMAIN"/>
    <property type="match status" value="1"/>
</dbReference>
<dbReference type="PROSITE" id="PS50238">
    <property type="entry name" value="RHOGAP"/>
    <property type="match status" value="1"/>
</dbReference>
<reference key="1">
    <citation type="journal article" date="1994" name="DNA Res.">
        <title>Prediction of the coding sequences of unidentified human genes. II. The coding sequences of 40 new genes (KIAA0041-KIAA0080) deduced by analysis of cDNA clones from human cell line KG-1.</title>
        <authorList>
            <person name="Nomura N."/>
            <person name="Nagase T."/>
            <person name="Miyajima N."/>
            <person name="Sazuka T."/>
            <person name="Tanaka A."/>
            <person name="Sato S."/>
            <person name="Seki N."/>
            <person name="Kawarabayasi Y."/>
            <person name="Ishikawa K."/>
            <person name="Tabata S."/>
        </authorList>
    </citation>
    <scope>NUCLEOTIDE SEQUENCE [LARGE SCALE MRNA] (ISOFORM 3)</scope>
    <source>
        <tissue>Bone marrow</tissue>
    </source>
</reference>
<reference key="2">
    <citation type="journal article" date="2004" name="Nat. Genet.">
        <title>Complete sequencing and characterization of 21,243 full-length human cDNAs.</title>
        <authorList>
            <person name="Ota T."/>
            <person name="Suzuki Y."/>
            <person name="Nishikawa T."/>
            <person name="Otsuki T."/>
            <person name="Sugiyama T."/>
            <person name="Irie R."/>
            <person name="Wakamatsu A."/>
            <person name="Hayashi K."/>
            <person name="Sato H."/>
            <person name="Nagai K."/>
            <person name="Kimura K."/>
            <person name="Makita H."/>
            <person name="Sekine M."/>
            <person name="Obayashi M."/>
            <person name="Nishi T."/>
            <person name="Shibahara T."/>
            <person name="Tanaka T."/>
            <person name="Ishii S."/>
            <person name="Yamamoto J."/>
            <person name="Saito K."/>
            <person name="Kawai Y."/>
            <person name="Isono Y."/>
            <person name="Nakamura Y."/>
            <person name="Nagahari K."/>
            <person name="Murakami K."/>
            <person name="Yasuda T."/>
            <person name="Iwayanagi T."/>
            <person name="Wagatsuma M."/>
            <person name="Shiratori A."/>
            <person name="Sudo H."/>
            <person name="Hosoiri T."/>
            <person name="Kaku Y."/>
            <person name="Kodaira H."/>
            <person name="Kondo H."/>
            <person name="Sugawara M."/>
            <person name="Takahashi M."/>
            <person name="Kanda K."/>
            <person name="Yokoi T."/>
            <person name="Furuya T."/>
            <person name="Kikkawa E."/>
            <person name="Omura Y."/>
            <person name="Abe K."/>
            <person name="Kamihara K."/>
            <person name="Katsuta N."/>
            <person name="Sato K."/>
            <person name="Tanikawa M."/>
            <person name="Yamazaki M."/>
            <person name="Ninomiya K."/>
            <person name="Ishibashi T."/>
            <person name="Yamashita H."/>
            <person name="Murakawa K."/>
            <person name="Fujimori K."/>
            <person name="Tanai H."/>
            <person name="Kimata M."/>
            <person name="Watanabe M."/>
            <person name="Hiraoka S."/>
            <person name="Chiba Y."/>
            <person name="Ishida S."/>
            <person name="Ono Y."/>
            <person name="Takiguchi S."/>
            <person name="Watanabe S."/>
            <person name="Yosida M."/>
            <person name="Hotuta T."/>
            <person name="Kusano J."/>
            <person name="Kanehori K."/>
            <person name="Takahashi-Fujii A."/>
            <person name="Hara H."/>
            <person name="Tanase T.-O."/>
            <person name="Nomura Y."/>
            <person name="Togiya S."/>
            <person name="Komai F."/>
            <person name="Hara R."/>
            <person name="Takeuchi K."/>
            <person name="Arita M."/>
            <person name="Imose N."/>
            <person name="Musashino K."/>
            <person name="Yuuki H."/>
            <person name="Oshima A."/>
            <person name="Sasaki N."/>
            <person name="Aotsuka S."/>
            <person name="Yoshikawa Y."/>
            <person name="Matsunawa H."/>
            <person name="Ichihara T."/>
            <person name="Shiohata N."/>
            <person name="Sano S."/>
            <person name="Moriya S."/>
            <person name="Momiyama H."/>
            <person name="Satoh N."/>
            <person name="Takami S."/>
            <person name="Terashima Y."/>
            <person name="Suzuki O."/>
            <person name="Nakagawa S."/>
            <person name="Senoh A."/>
            <person name="Mizoguchi H."/>
            <person name="Goto Y."/>
            <person name="Shimizu F."/>
            <person name="Wakebe H."/>
            <person name="Hishigaki H."/>
            <person name="Watanabe T."/>
            <person name="Sugiyama A."/>
            <person name="Takemoto M."/>
            <person name="Kawakami B."/>
            <person name="Yamazaki M."/>
            <person name="Watanabe K."/>
            <person name="Kumagai A."/>
            <person name="Itakura S."/>
            <person name="Fukuzumi Y."/>
            <person name="Fujimori Y."/>
            <person name="Komiyama M."/>
            <person name="Tashiro H."/>
            <person name="Tanigami A."/>
            <person name="Fujiwara T."/>
            <person name="Ono T."/>
            <person name="Yamada K."/>
            <person name="Fujii Y."/>
            <person name="Ozaki K."/>
            <person name="Hirao M."/>
            <person name="Ohmori Y."/>
            <person name="Kawabata A."/>
            <person name="Hikiji T."/>
            <person name="Kobatake N."/>
            <person name="Inagaki H."/>
            <person name="Ikema Y."/>
            <person name="Okamoto S."/>
            <person name="Okitani R."/>
            <person name="Kawakami T."/>
            <person name="Noguchi S."/>
            <person name="Itoh T."/>
            <person name="Shigeta K."/>
            <person name="Senba T."/>
            <person name="Matsumura K."/>
            <person name="Nakajima Y."/>
            <person name="Mizuno T."/>
            <person name="Morinaga M."/>
            <person name="Sasaki M."/>
            <person name="Togashi T."/>
            <person name="Oyama M."/>
            <person name="Hata H."/>
            <person name="Watanabe M."/>
            <person name="Komatsu T."/>
            <person name="Mizushima-Sugano J."/>
            <person name="Satoh T."/>
            <person name="Shirai Y."/>
            <person name="Takahashi Y."/>
            <person name="Nakagawa K."/>
            <person name="Okumura K."/>
            <person name="Nagase T."/>
            <person name="Nomura N."/>
            <person name="Kikuchi H."/>
            <person name="Masuho Y."/>
            <person name="Yamashita R."/>
            <person name="Nakai K."/>
            <person name="Yada T."/>
            <person name="Nakamura Y."/>
            <person name="Ohara O."/>
            <person name="Isogai T."/>
            <person name="Sugano S."/>
        </authorList>
    </citation>
    <scope>NUCLEOTIDE SEQUENCE [LARGE SCALE MRNA] (ISOFORMS 4 AND 5)</scope>
    <scope>VARIANTS SER-555 AND THR-556</scope>
    <source>
        <tissue>Umbilical cord blood</tissue>
    </source>
</reference>
<reference key="3">
    <citation type="journal article" date="2005" name="Nature">
        <title>Generation and annotation of the DNA sequences of human chromosomes 2 and 4.</title>
        <authorList>
            <person name="Hillier L.W."/>
            <person name="Graves T.A."/>
            <person name="Fulton R.S."/>
            <person name="Fulton L.A."/>
            <person name="Pepin K.H."/>
            <person name="Minx P."/>
            <person name="Wagner-McPherson C."/>
            <person name="Layman D."/>
            <person name="Wylie K."/>
            <person name="Sekhon M."/>
            <person name="Becker M.C."/>
            <person name="Fewell G.A."/>
            <person name="Delehaunty K.D."/>
            <person name="Miner T.L."/>
            <person name="Nash W.E."/>
            <person name="Kremitzki C."/>
            <person name="Oddy L."/>
            <person name="Du H."/>
            <person name="Sun H."/>
            <person name="Bradshaw-Cordum H."/>
            <person name="Ali J."/>
            <person name="Carter J."/>
            <person name="Cordes M."/>
            <person name="Harris A."/>
            <person name="Isak A."/>
            <person name="van Brunt A."/>
            <person name="Nguyen C."/>
            <person name="Du F."/>
            <person name="Courtney L."/>
            <person name="Kalicki J."/>
            <person name="Ozersky P."/>
            <person name="Abbott S."/>
            <person name="Armstrong J."/>
            <person name="Belter E.A."/>
            <person name="Caruso L."/>
            <person name="Cedroni M."/>
            <person name="Cotton M."/>
            <person name="Davidson T."/>
            <person name="Desai A."/>
            <person name="Elliott G."/>
            <person name="Erb T."/>
            <person name="Fronick C."/>
            <person name="Gaige T."/>
            <person name="Haakenson W."/>
            <person name="Haglund K."/>
            <person name="Holmes A."/>
            <person name="Harkins R."/>
            <person name="Kim K."/>
            <person name="Kruchowski S.S."/>
            <person name="Strong C.M."/>
            <person name="Grewal N."/>
            <person name="Goyea E."/>
            <person name="Hou S."/>
            <person name="Levy A."/>
            <person name="Martinka S."/>
            <person name="Mead K."/>
            <person name="McLellan M.D."/>
            <person name="Meyer R."/>
            <person name="Randall-Maher J."/>
            <person name="Tomlinson C."/>
            <person name="Dauphin-Kohlberg S."/>
            <person name="Kozlowicz-Reilly A."/>
            <person name="Shah N."/>
            <person name="Swearengen-Shahid S."/>
            <person name="Snider J."/>
            <person name="Strong J.T."/>
            <person name="Thompson J."/>
            <person name="Yoakum M."/>
            <person name="Leonard S."/>
            <person name="Pearman C."/>
            <person name="Trani L."/>
            <person name="Radionenko M."/>
            <person name="Waligorski J.E."/>
            <person name="Wang C."/>
            <person name="Rock S.M."/>
            <person name="Tin-Wollam A.-M."/>
            <person name="Maupin R."/>
            <person name="Latreille P."/>
            <person name="Wendl M.C."/>
            <person name="Yang S.-P."/>
            <person name="Pohl C."/>
            <person name="Wallis J.W."/>
            <person name="Spieth J."/>
            <person name="Bieri T.A."/>
            <person name="Berkowicz N."/>
            <person name="Nelson J.O."/>
            <person name="Osborne J."/>
            <person name="Ding L."/>
            <person name="Meyer R."/>
            <person name="Sabo A."/>
            <person name="Shotland Y."/>
            <person name="Sinha P."/>
            <person name="Wohldmann P.E."/>
            <person name="Cook L.L."/>
            <person name="Hickenbotham M.T."/>
            <person name="Eldred J."/>
            <person name="Williams D."/>
            <person name="Jones T.A."/>
            <person name="She X."/>
            <person name="Ciccarelli F.D."/>
            <person name="Izaurralde E."/>
            <person name="Taylor J."/>
            <person name="Schmutz J."/>
            <person name="Myers R.M."/>
            <person name="Cox D.R."/>
            <person name="Huang X."/>
            <person name="McPherson J.D."/>
            <person name="Mardis E.R."/>
            <person name="Clifton S.W."/>
            <person name="Warren W.C."/>
            <person name="Chinwalla A.T."/>
            <person name="Eddy S.R."/>
            <person name="Marra M.A."/>
            <person name="Ovcharenko I."/>
            <person name="Furey T.S."/>
            <person name="Miller W."/>
            <person name="Eichler E.E."/>
            <person name="Bork P."/>
            <person name="Suyama M."/>
            <person name="Torrents D."/>
            <person name="Waterston R.H."/>
            <person name="Wilson R.K."/>
        </authorList>
    </citation>
    <scope>NUCLEOTIDE SEQUENCE [LARGE SCALE GENOMIC DNA]</scope>
</reference>
<reference key="4">
    <citation type="submission" date="2005-09" db="EMBL/GenBank/DDBJ databases">
        <authorList>
            <person name="Mural R.J."/>
            <person name="Istrail S."/>
            <person name="Sutton G.G."/>
            <person name="Florea L."/>
            <person name="Halpern A.L."/>
            <person name="Mobarry C.M."/>
            <person name="Lippert R."/>
            <person name="Walenz B."/>
            <person name="Shatkay H."/>
            <person name="Dew I."/>
            <person name="Miller J.R."/>
            <person name="Flanigan M.J."/>
            <person name="Edwards N.J."/>
            <person name="Bolanos R."/>
            <person name="Fasulo D."/>
            <person name="Halldorsson B.V."/>
            <person name="Hannenhalli S."/>
            <person name="Turner R."/>
            <person name="Yooseph S."/>
            <person name="Lu F."/>
            <person name="Nusskern D.R."/>
            <person name="Shue B.C."/>
            <person name="Zheng X.H."/>
            <person name="Zhong F."/>
            <person name="Delcher A.L."/>
            <person name="Huson D.H."/>
            <person name="Kravitz S.A."/>
            <person name="Mouchard L."/>
            <person name="Reinert K."/>
            <person name="Remington K.A."/>
            <person name="Clark A.G."/>
            <person name="Waterman M.S."/>
            <person name="Eichler E.E."/>
            <person name="Adams M.D."/>
            <person name="Hunkapiller M.W."/>
            <person name="Myers E.W."/>
            <person name="Venter J.C."/>
        </authorList>
    </citation>
    <scope>NUCLEOTIDE SEQUENCE [LARGE SCALE GENOMIC DNA]</scope>
</reference>
<reference key="5">
    <citation type="journal article" date="2004" name="Genome Res.">
        <title>The status, quality, and expansion of the NIH full-length cDNA project: the Mammalian Gene Collection (MGC).</title>
        <authorList>
            <consortium name="The MGC Project Team"/>
        </authorList>
    </citation>
    <scope>NUCLEOTIDE SEQUENCE [LARGE SCALE MRNA] (ISOFORM 2)</scope>
    <source>
        <tissue>Blood</tissue>
    </source>
</reference>
<reference key="6">
    <citation type="journal article" date="2009" name="Sci. Signal.">
        <title>Quantitative phosphoproteomic analysis of T cell receptor signaling reveals system-wide modulation of protein-protein interactions.</title>
        <authorList>
            <person name="Mayya V."/>
            <person name="Lundgren D.H."/>
            <person name="Hwang S.-I."/>
            <person name="Rezaul K."/>
            <person name="Wu L."/>
            <person name="Eng J.K."/>
            <person name="Rodionov V."/>
            <person name="Han D.K."/>
        </authorList>
    </citation>
    <scope>PHOSPHORYLATION [LARGE SCALE ANALYSIS] AT SER-395</scope>
    <scope>IDENTIFICATION BY MASS SPECTROMETRY [LARGE SCALE ANALYSIS]</scope>
    <source>
        <tissue>Leukemic T-cell</tissue>
    </source>
</reference>
<reference key="7">
    <citation type="journal article" date="2013" name="J. Proteome Res.">
        <title>Toward a comprehensive characterization of a human cancer cell phosphoproteome.</title>
        <authorList>
            <person name="Zhou H."/>
            <person name="Di Palma S."/>
            <person name="Preisinger C."/>
            <person name="Peng M."/>
            <person name="Polat A.N."/>
            <person name="Heck A.J."/>
            <person name="Mohammed S."/>
        </authorList>
    </citation>
    <scope>PHOSPHORYLATION [LARGE SCALE ANALYSIS] AT SER-362</scope>
    <scope>IDENTIFICATION BY MASS SPECTROMETRY [LARGE SCALE ANALYSIS]</scope>
    <source>
        <tissue>Erythroleukemia</tissue>
    </source>
</reference>
<reference key="8">
    <citation type="submission" date="2004-06" db="PDB data bank">
        <title>Solution structure of the pleckstrin homology domain of human KIAA0053 protein.</title>
        <authorList>
            <consortium name="RIKEN structural genomics initiative (RSGI)"/>
        </authorList>
    </citation>
    <scope>STRUCTURE BY NMR OF 47-151</scope>
</reference>
<evidence type="ECO:0000250" key="1"/>
<evidence type="ECO:0000250" key="2">
    <source>
        <dbReference type="UniProtKB" id="Q8BYW1"/>
    </source>
</evidence>
<evidence type="ECO:0000255" key="3"/>
<evidence type="ECO:0000255" key="4">
    <source>
        <dbReference type="PROSITE-ProRule" id="PRU00145"/>
    </source>
</evidence>
<evidence type="ECO:0000255" key="5">
    <source>
        <dbReference type="PROSITE-ProRule" id="PRU00172"/>
    </source>
</evidence>
<evidence type="ECO:0000256" key="6">
    <source>
        <dbReference type="SAM" id="MobiDB-lite"/>
    </source>
</evidence>
<evidence type="ECO:0000269" key="7">
    <source>
    </source>
</evidence>
<evidence type="ECO:0000303" key="8">
    <source>
    </source>
</evidence>
<evidence type="ECO:0000303" key="9">
    <source>
    </source>
</evidence>
<evidence type="ECO:0000303" key="10">
    <source>
    </source>
</evidence>
<evidence type="ECO:0000305" key="11"/>
<evidence type="ECO:0007744" key="12">
    <source>
    </source>
</evidence>
<evidence type="ECO:0007744" key="13">
    <source>
    </source>
</evidence>
<evidence type="ECO:0007829" key="14">
    <source>
        <dbReference type="PDB" id="1V89"/>
    </source>
</evidence>
<comment type="function">
    <text evidence="1">GTPase activator for the Rho-type GTPases by converting them to an inactive GDP-bound state.</text>
</comment>
<comment type="interaction">
    <interactant intactId="EBI-21499901">
        <id>P42331-2</id>
    </interactant>
    <interactant intactId="EBI-356687">
        <id>P40227</id>
        <label>CCT6A</label>
    </interactant>
    <organismsDiffer>false</organismsDiffer>
    <experiments>3</experiments>
</comment>
<comment type="interaction">
    <interactant intactId="EBI-21499901">
        <id>P42331-2</id>
    </interactant>
    <interactant intactId="EBI-12143631">
        <id>Q6ZTQ4</id>
        <label>CDHR3</label>
    </interactant>
    <organismsDiffer>false</organismsDiffer>
    <experiments>3</experiments>
</comment>
<comment type="interaction">
    <interactant intactId="EBI-21499901">
        <id>P42331-2</id>
    </interactant>
    <interactant intactId="EBI-6447163">
        <id>Q8N7X4</id>
        <label>MAGEB6</label>
    </interactant>
    <organismsDiffer>false</organismsDiffer>
    <experiments>3</experiments>
</comment>
<comment type="interaction">
    <interactant intactId="EBI-21499901">
        <id>P42331-2</id>
    </interactant>
    <interactant intactId="EBI-354022">
        <id>P45880</id>
        <label>VDAC2</label>
    </interactant>
    <organismsDiffer>false</organismsDiffer>
    <experiments>3</experiments>
</comment>
<comment type="alternative products">
    <event type="alternative splicing"/>
    <isoform>
        <id>P42331-1</id>
        <name>1</name>
        <sequence type="displayed"/>
    </isoform>
    <isoform>
        <id>P42331-2</id>
        <name>2</name>
        <sequence type="described" ref="VSP_037345 VSP_010275 VSP_010276"/>
    </isoform>
    <isoform>
        <id>P42331-3</id>
        <name>3</name>
        <sequence type="described" ref="VSP_037345"/>
    </isoform>
    <isoform>
        <id>P42331-4</id>
        <name>4</name>
        <sequence type="described" ref="VSP_010275"/>
    </isoform>
    <isoform>
        <id>P42331-5</id>
        <name>5</name>
        <sequence type="described" ref="VSP_045391"/>
    </isoform>
    <isoform>
        <id>P42331-6</id>
        <name>6</name>
        <sequence type="described" ref="VSP_037345 VSP_010275"/>
    </isoform>
</comment>
<comment type="sequence caution" evidence="11">
    <conflict type="erroneous initiation">
        <sequence resource="EMBL-CDS" id="BAA06125"/>
    </conflict>
    <text>Extended N-terminus.</text>
</comment>
<organism>
    <name type="scientific">Homo sapiens</name>
    <name type="common">Human</name>
    <dbReference type="NCBI Taxonomy" id="9606"/>
    <lineage>
        <taxon>Eukaryota</taxon>
        <taxon>Metazoa</taxon>
        <taxon>Chordata</taxon>
        <taxon>Craniata</taxon>
        <taxon>Vertebrata</taxon>
        <taxon>Euteleostomi</taxon>
        <taxon>Mammalia</taxon>
        <taxon>Eutheria</taxon>
        <taxon>Euarchontoglires</taxon>
        <taxon>Primates</taxon>
        <taxon>Haplorrhini</taxon>
        <taxon>Catarrhini</taxon>
        <taxon>Hominidae</taxon>
        <taxon>Homo</taxon>
    </lineage>
</organism>
<keyword id="KW-0002">3D-structure</keyword>
<keyword id="KW-0025">Alternative splicing</keyword>
<keyword id="KW-0175">Coiled coil</keyword>
<keyword id="KW-0343">GTPase activation</keyword>
<keyword id="KW-0597">Phosphoprotein</keyword>
<keyword id="KW-1267">Proteomics identification</keyword>
<keyword id="KW-1185">Reference proteome</keyword>
<gene>
    <name type="primary">ARHGAP25</name>
    <name type="synonym">KIAA0053</name>
</gene>
<sequence length="645" mass="73435">MSLKLPRNWDFNLKVEAAKIARSRSVMTGEQMAAFHPSSTPNPLERPIKMGWLKKQRSIVKNWQQRYFVLRAQQLYYYKDEEDTKPQGCMYLPGCTIKEIATNPEEAGKFVFEIIPASWDQNRMGQDSYVLMASSQAEMEEWVKFLRRVAGTPCGVFGQRLDETVAYEQKFGPHLVPILVEKCAEFILEHGRNEEGIFRLPGQDNLVKQLRDAFDAGERPSFDRDTDVHTVASLLKLYLRDLPEPVVPWSQYEGFLLCGQLTNADEAKAQQELMKQLSILPRDNYSLLSYICRFLHEIQLNCAVNKMSVDNLATVIGVNLIRSKVEDPAVIMRGTPQIQRVMTMMIRDHEVLFPKSKDIPLSPPAQKNDPKKAPVARSSVGWDATEDLRISRTDSFSSMTSDSDTTSPTGQQPSDAFPEDSSKVPREKPGDWKMQSRKRTQTLPNRKCFLTSAFQGANSSKMEIFKNEFWSPSSEAKAGEGHRRTMSQDLRQLSDSQRTSTYDNVPSLPGSPGEEASALSSQACDSKGDTLASPNSETGPGKKNSGEEEIDSLQRMVQELRKEIETQKQMYEEQIKNLEKENYDVWAKVVRLNEELEKEKKKSAALEISLRNMERSREDVEKRNKALEEEVKEFVKSMKEPKTEA</sequence>
<accession>P42331</accession>
<accession>A8K2Y1</accession>
<accession>B7Z498</accession>
<accession>E9PFQ7</accession>
<accession>G5E9G2</accession>
<accession>Q8IXQ2</accession>
<feature type="chain" id="PRO_0000056716" description="Rho GTPase-activating protein 25">
    <location>
        <begin position="1"/>
        <end position="645"/>
    </location>
</feature>
<feature type="domain" description="PH" evidence="4">
    <location>
        <begin position="46"/>
        <end position="151"/>
    </location>
</feature>
<feature type="domain" description="Rho-GAP" evidence="5">
    <location>
        <begin position="159"/>
        <end position="353"/>
    </location>
</feature>
<feature type="region of interest" description="Disordered" evidence="6">
    <location>
        <begin position="355"/>
        <end position="444"/>
    </location>
</feature>
<feature type="region of interest" description="Disordered" evidence="6">
    <location>
        <begin position="469"/>
        <end position="550"/>
    </location>
</feature>
<feature type="coiled-coil region" evidence="3">
    <location>
        <begin position="541"/>
        <end position="644"/>
    </location>
</feature>
<feature type="compositionally biased region" description="Low complexity" evidence="6">
    <location>
        <begin position="393"/>
        <end position="409"/>
    </location>
</feature>
<feature type="compositionally biased region" description="Basic and acidic residues" evidence="6">
    <location>
        <begin position="420"/>
        <end position="431"/>
    </location>
</feature>
<feature type="compositionally biased region" description="Polar residues" evidence="6">
    <location>
        <begin position="487"/>
        <end position="504"/>
    </location>
</feature>
<feature type="site" description="Arginine finger; crucial for GTP hydrolysis by stabilizing the transition state" evidence="5">
    <location>
        <position position="199"/>
    </location>
</feature>
<feature type="modified residue" description="Phosphoserine" evidence="13">
    <location>
        <position position="362"/>
    </location>
</feature>
<feature type="modified residue" description="Phosphoserine" evidence="12">
    <location>
        <position position="395"/>
    </location>
</feature>
<feature type="modified residue" description="Phosphothreonine" evidence="2">
    <location>
        <position position="406"/>
    </location>
</feature>
<feature type="modified residue" description="Phosphoserine" evidence="2">
    <location>
        <position position="536"/>
    </location>
</feature>
<feature type="splice variant" id="VSP_037345" description="In isoform 2, isoform 3 and isoform 6." evidence="9 10">
    <original>MSLKLPRNWDFNLKVEAAK</original>
    <variation>MSLGQSACLFLS</variation>
    <location>
        <begin position="1"/>
        <end position="19"/>
    </location>
</feature>
<feature type="splice variant" id="VSP_045391" description="In isoform 5." evidence="8">
    <location>
        <begin position="117"/>
        <end position="155"/>
    </location>
</feature>
<feature type="splice variant" id="VSP_010275" description="In isoform 2, isoform 4 and isoform 6." evidence="8 9">
    <original>G</original>
    <variation>GA</variation>
    <location>
        <position position="155"/>
    </location>
</feature>
<feature type="splice variant" id="VSP_010276" description="In isoform 2." evidence="9">
    <original>TSDSDTTSPTGQQPSDAFPEDSSKVPREKPGDWKMQSRKRTQTLPNRKCFLTSAFQGANSSKMEIFKNEFWSPSSEAKAGEGHRRTMSQDLRQLSDSQRTSTYDNVPSLPGSPGEEASALSSQACDSKGDTLASPNSETGPGKKNSGEEEIDSLQRMVQELRKEIETQKQMYEEQIKNLEKENYDVWAKVVRLNEELEKEKKKSAALEISLRNMERSREDVEKRNKALEEEVKEFVKSMKEPKTEA</original>
    <variation>VRCREPSCFHWVLPLVQAIPCKACSRVAIWGVLGDAVAVGAAATDSSEHTLKAWPLSKSSFYWHL</variation>
    <location>
        <begin position="400"/>
        <end position="645"/>
    </location>
</feature>
<feature type="sequence variant" id="VAR_049142" description="In dbSNP:rs3749130.">
    <original>R</original>
    <variation>W</variation>
    <location>
        <position position="192"/>
    </location>
</feature>
<feature type="sequence variant" id="VAR_049143" description="In dbSNP:rs4241344." evidence="7">
    <original>R</original>
    <variation>S</variation>
    <location>
        <position position="555"/>
    </location>
</feature>
<feature type="sequence variant" id="VAR_049144" description="In dbSNP:rs10177248." evidence="7">
    <original>M</original>
    <variation>T</variation>
    <location>
        <position position="556"/>
    </location>
</feature>
<feature type="strand" evidence="14">
    <location>
        <begin position="47"/>
        <end position="56"/>
    </location>
</feature>
<feature type="strand" evidence="14">
    <location>
        <begin position="58"/>
        <end position="61"/>
    </location>
</feature>
<feature type="strand" evidence="14">
    <location>
        <begin position="63"/>
        <end position="71"/>
    </location>
</feature>
<feature type="strand" evidence="14">
    <location>
        <begin position="74"/>
        <end position="82"/>
    </location>
</feature>
<feature type="strand" evidence="14">
    <location>
        <begin position="87"/>
        <end position="90"/>
    </location>
</feature>
<feature type="strand" evidence="14">
    <location>
        <begin position="95"/>
        <end position="100"/>
    </location>
</feature>
<feature type="strand" evidence="14">
    <location>
        <begin position="111"/>
        <end position="117"/>
    </location>
</feature>
<feature type="strand" evidence="14">
    <location>
        <begin position="129"/>
        <end position="132"/>
    </location>
</feature>
<feature type="helix" evidence="14">
    <location>
        <begin position="136"/>
        <end position="151"/>
    </location>
</feature>